<dbReference type="EMBL" id="AE016827">
    <property type="protein sequence ID" value="AAU37895.1"/>
    <property type="molecule type" value="Genomic_DNA"/>
</dbReference>
<dbReference type="RefSeq" id="WP_011200462.1">
    <property type="nucleotide sequence ID" value="NC_006300.1"/>
</dbReference>
<dbReference type="SMR" id="Q65T15"/>
<dbReference type="STRING" id="221988.MS1288"/>
<dbReference type="KEGG" id="msu:MS1288"/>
<dbReference type="eggNOG" id="COG3107">
    <property type="taxonomic scope" value="Bacteria"/>
</dbReference>
<dbReference type="HOGENOM" id="CLU_026091_1_1_6"/>
<dbReference type="OrthoDB" id="6708821at2"/>
<dbReference type="Proteomes" id="UP000000607">
    <property type="component" value="Chromosome"/>
</dbReference>
<dbReference type="GO" id="GO:0031241">
    <property type="term" value="C:periplasmic side of cell outer membrane"/>
    <property type="evidence" value="ECO:0007669"/>
    <property type="project" value="UniProtKB-UniRule"/>
</dbReference>
<dbReference type="GO" id="GO:0030234">
    <property type="term" value="F:enzyme regulator activity"/>
    <property type="evidence" value="ECO:0007669"/>
    <property type="project" value="UniProtKB-UniRule"/>
</dbReference>
<dbReference type="GO" id="GO:0009252">
    <property type="term" value="P:peptidoglycan biosynthetic process"/>
    <property type="evidence" value="ECO:0007669"/>
    <property type="project" value="UniProtKB-UniRule"/>
</dbReference>
<dbReference type="GO" id="GO:0008360">
    <property type="term" value="P:regulation of cell shape"/>
    <property type="evidence" value="ECO:0007669"/>
    <property type="project" value="UniProtKB-KW"/>
</dbReference>
<dbReference type="CDD" id="cd06339">
    <property type="entry name" value="PBP1_YraM_LppC_lipoprotein-like"/>
    <property type="match status" value="1"/>
</dbReference>
<dbReference type="Gene3D" id="1.25.40.650">
    <property type="match status" value="1"/>
</dbReference>
<dbReference type="Gene3D" id="3.40.50.2300">
    <property type="match status" value="2"/>
</dbReference>
<dbReference type="Gene3D" id="1.25.40.10">
    <property type="entry name" value="Tetratricopeptide repeat domain"/>
    <property type="match status" value="1"/>
</dbReference>
<dbReference type="HAMAP" id="MF_01890">
    <property type="entry name" value="LpoA"/>
    <property type="match status" value="1"/>
</dbReference>
<dbReference type="InterPro" id="IPR007443">
    <property type="entry name" value="LpoA"/>
</dbReference>
<dbReference type="InterPro" id="IPR028082">
    <property type="entry name" value="Peripla_BP_I"/>
</dbReference>
<dbReference type="InterPro" id="IPR011990">
    <property type="entry name" value="TPR-like_helical_dom_sf"/>
</dbReference>
<dbReference type="PANTHER" id="PTHR38038">
    <property type="entry name" value="PENICILLIN-BINDING PROTEIN ACTIVATOR LPOA"/>
    <property type="match status" value="1"/>
</dbReference>
<dbReference type="PANTHER" id="PTHR38038:SF1">
    <property type="entry name" value="PENICILLIN-BINDING PROTEIN ACTIVATOR LPOA"/>
    <property type="match status" value="1"/>
</dbReference>
<dbReference type="Pfam" id="PF04348">
    <property type="entry name" value="LppC"/>
    <property type="match status" value="1"/>
</dbReference>
<dbReference type="SUPFAM" id="SSF53822">
    <property type="entry name" value="Periplasmic binding protein-like I"/>
    <property type="match status" value="1"/>
</dbReference>
<dbReference type="PROSITE" id="PS51257">
    <property type="entry name" value="PROKAR_LIPOPROTEIN"/>
    <property type="match status" value="1"/>
</dbReference>
<keyword id="KW-0998">Cell outer membrane</keyword>
<keyword id="KW-0133">Cell shape</keyword>
<keyword id="KW-0449">Lipoprotein</keyword>
<keyword id="KW-0472">Membrane</keyword>
<keyword id="KW-0564">Palmitate</keyword>
<keyword id="KW-0573">Peptidoglycan synthesis</keyword>
<keyword id="KW-0732">Signal</keyword>
<name>LPOA_MANSM</name>
<gene>
    <name evidence="1" type="primary">lpoA</name>
    <name type="synonym">lppC</name>
    <name type="ordered locus">MS1288</name>
</gene>
<organism>
    <name type="scientific">Mannheimia succiniciproducens (strain KCTC 0769BP / MBEL55E)</name>
    <dbReference type="NCBI Taxonomy" id="221988"/>
    <lineage>
        <taxon>Bacteria</taxon>
        <taxon>Pseudomonadati</taxon>
        <taxon>Pseudomonadota</taxon>
        <taxon>Gammaproteobacteria</taxon>
        <taxon>Pasteurellales</taxon>
        <taxon>Pasteurellaceae</taxon>
        <taxon>Basfia</taxon>
    </lineage>
</organism>
<protein>
    <recommendedName>
        <fullName evidence="1">Penicillin-binding protein activator LpoA</fullName>
        <shortName evidence="1">PBP activator LpoA</shortName>
    </recommendedName>
</protein>
<accession>Q65T15</accession>
<evidence type="ECO:0000255" key="1">
    <source>
        <dbReference type="HAMAP-Rule" id="MF_01890"/>
    </source>
</evidence>
<feature type="signal peptide" evidence="1">
    <location>
        <begin position="1"/>
        <end position="25"/>
    </location>
</feature>
<feature type="chain" id="PRO_0000405937" description="Penicillin-binding protein activator LpoA">
    <location>
        <begin position="26"/>
        <end position="574"/>
    </location>
</feature>
<feature type="lipid moiety-binding region" description="N-palmitoyl cysteine" evidence="1">
    <location>
        <position position="26"/>
    </location>
</feature>
<feature type="lipid moiety-binding region" description="S-diacylglycerol cysteine" evidence="1">
    <location>
        <position position="26"/>
    </location>
</feature>
<comment type="function">
    <text evidence="1">Regulator of peptidoglycan synthesis that is essential for the function of penicillin-binding protein 1A (PBP1a).</text>
</comment>
<comment type="subunit">
    <text evidence="1">Interacts with PBP1a.</text>
</comment>
<comment type="subcellular location">
    <subcellularLocation>
        <location evidence="1">Cell outer membrane</location>
        <topology evidence="1">Lipid-anchor</topology>
        <orientation evidence="1">Periplasmic side</orientation>
    </subcellularLocation>
</comment>
<comment type="similarity">
    <text evidence="1">Belongs to the LpoA family.</text>
</comment>
<reference key="1">
    <citation type="journal article" date="2004" name="Nat. Biotechnol.">
        <title>The genome sequence of the capnophilic rumen bacterium Mannheimia succiniciproducens.</title>
        <authorList>
            <person name="Hong S.H."/>
            <person name="Kim J.S."/>
            <person name="Lee S.Y."/>
            <person name="In Y.H."/>
            <person name="Choi S.S."/>
            <person name="Rih J.-K."/>
            <person name="Kim C.H."/>
            <person name="Jeong H."/>
            <person name="Hur C.G."/>
            <person name="Kim J.J."/>
        </authorList>
    </citation>
    <scope>NUCLEOTIDE SEQUENCE [LARGE SCALE GENOMIC DNA]</scope>
    <source>
        <strain>KCTC 0769BP / MBEL55E</strain>
    </source>
</reference>
<sequence length="574" mass="63113">MTILLQRAKFKKRLMPILFPLMLAGCTNLFGSNFQDVLRNDANASSEFYMNKIEQTREVEDQQTYKLLAARVLVTENKTAQAEALLAELTKLTPEQQLDKSILDALIAAVKRDNDSASALLKTIPLAQLSQSQTSRYYEVQARIAENKTDIIEAVKARIQMDMALTDVQRKQDNIDKIWALLRSGNKTLINTTQPEGNVALAGWLDLTKAYNDNLSQPSQLAQALQNWKTTYPNHSAAYLFPTELKSLSNFTQTQVNKIALLLPLSGNASILGSTIKSGFDDSRGADKSVQVDVIDTMAMPVTDAIALAKQNGDGMIVGPLLKDNVDVILSNPTAVQGMNVLALNSTPNARAIDKMCYYGLAPEDEAEAAANRMWNDGVRQPIVAVPQSDLGQRTASAFNVRWQQLAASDADVRYYNQPDDAAYNLTADPAQNQAIYIVVTDSEQLMSIKGALDNSGVKAKIYTNSRNNSSNNAVEYRLAMEGVTFSDIPFFKDLDGEQYKKIEAATGGDYSLMRLYAMGADSWLLAHSFNELRQVPGFSLSGLTGKLTAGPNCNVERDLTWYSYQGGNIVPLN</sequence>
<proteinExistence type="inferred from homology"/>